<feature type="chain" id="PRO_0000447547" description="Transcription factor MYC2">
    <location>
        <begin position="1"/>
        <end position="689"/>
    </location>
</feature>
<feature type="domain" description="bHLH" evidence="1">
    <location>
        <begin position="509"/>
        <end position="558"/>
    </location>
</feature>
<feature type="region of interest" description="JAZ-interaction domain" evidence="14">
    <location>
        <begin position="94"/>
        <end position="172"/>
    </location>
</feature>
<feature type="region of interest" description="Disordered" evidence="2">
    <location>
        <begin position="316"/>
        <end position="361"/>
    </location>
</feature>
<feature type="region of interest" description="Disordered" evidence="2">
    <location>
        <begin position="420"/>
        <end position="519"/>
    </location>
</feature>
<feature type="region of interest" description="Basic motif; degenerate" evidence="1">
    <location>
        <begin position="509"/>
        <end position="522"/>
    </location>
</feature>
<feature type="region of interest" description="Helix-loop-helix motif" evidence="1">
    <location>
        <begin position="523"/>
        <end position="558"/>
    </location>
</feature>
<feature type="region of interest" description="Disordered" evidence="2">
    <location>
        <begin position="563"/>
        <end position="602"/>
    </location>
</feature>
<feature type="compositionally biased region" description="Polar residues" evidence="2">
    <location>
        <begin position="316"/>
        <end position="349"/>
    </location>
</feature>
<feature type="compositionally biased region" description="Low complexity" evidence="2">
    <location>
        <begin position="350"/>
        <end position="361"/>
    </location>
</feature>
<feature type="compositionally biased region" description="Basic and acidic residues" evidence="2">
    <location>
        <begin position="471"/>
        <end position="495"/>
    </location>
</feature>
<feature type="compositionally biased region" description="Basic residues" evidence="2">
    <location>
        <begin position="496"/>
        <end position="505"/>
    </location>
</feature>
<feature type="compositionally biased region" description="Basic and acidic residues" evidence="2">
    <location>
        <begin position="506"/>
        <end position="519"/>
    </location>
</feature>
<feature type="compositionally biased region" description="Basic and acidic residues" evidence="2">
    <location>
        <begin position="566"/>
        <end position="585"/>
    </location>
</feature>
<feature type="sequence conflict" description="In Ref. 1; AGZ94899." evidence="13" ref="1">
    <original>V</original>
    <variation>A</variation>
    <location>
        <position position="45"/>
    </location>
</feature>
<feature type="sequence conflict" description="In Ref. 1; AGZ94899." evidence="13" ref="1">
    <original>F</original>
    <variation>L</variation>
    <location>
        <position position="365"/>
    </location>
</feature>
<feature type="sequence conflict" description="In Ref. 1; AGZ94899." evidence="13" ref="1">
    <original>H</original>
    <variation>N</variation>
    <location>
        <position position="671"/>
    </location>
</feature>
<organism>
    <name type="scientific">Solanum lycopersicum</name>
    <name type="common">Tomato</name>
    <name type="synonym">Lycopersicon esculentum</name>
    <dbReference type="NCBI Taxonomy" id="4081"/>
    <lineage>
        <taxon>Eukaryota</taxon>
        <taxon>Viridiplantae</taxon>
        <taxon>Streptophyta</taxon>
        <taxon>Embryophyta</taxon>
        <taxon>Tracheophyta</taxon>
        <taxon>Spermatophyta</taxon>
        <taxon>Magnoliopsida</taxon>
        <taxon>eudicotyledons</taxon>
        <taxon>Gunneridae</taxon>
        <taxon>Pentapetalae</taxon>
        <taxon>asterids</taxon>
        <taxon>lamiids</taxon>
        <taxon>Solanales</taxon>
        <taxon>Solanaceae</taxon>
        <taxon>Solanoideae</taxon>
        <taxon>Solaneae</taxon>
        <taxon>Solanum</taxon>
        <taxon>Solanum subgen. Lycopersicon</taxon>
    </lineage>
</organism>
<protein>
    <recommendedName>
        <fullName evidence="10">Transcription factor MYC2</fullName>
        <shortName evidence="10">LeMYC2</shortName>
        <shortName evidence="12">SlMYC2</shortName>
    </recommendedName>
    <alternativeName>
        <fullName evidence="11">Basic helix-loop-helix protein 147</fullName>
    </alternativeName>
    <alternativeName>
        <fullName evidence="11">Transcription factor bHLH147</fullName>
    </alternativeName>
    <alternativeName>
        <fullName evidence="13">bHLH transcription factor bHLH147</fullName>
    </alternativeName>
</protein>
<dbReference type="EMBL" id="KF428776">
    <property type="protein sequence ID" value="AGZ94899.1"/>
    <property type="molecule type" value="mRNA"/>
</dbReference>
<dbReference type="EMBL" id="CM001071">
    <property type="status" value="NOT_ANNOTATED_CDS"/>
    <property type="molecule type" value="Genomic_DNA"/>
</dbReference>
<dbReference type="RefSeq" id="NP_001311412.1">
    <property type="nucleotide sequence ID" value="NM_001324483.1"/>
</dbReference>
<dbReference type="SMR" id="A0A3Q7HRZ6"/>
<dbReference type="FunCoup" id="A0A3Q7HRZ6">
    <property type="interactions" value="392"/>
</dbReference>
<dbReference type="STRING" id="4081.A0A3Q7HRZ6"/>
<dbReference type="PaxDb" id="4081-Solyc08g076930.1.1"/>
<dbReference type="EnsemblPlants" id="Solyc08g076930.1.1">
    <property type="protein sequence ID" value="Solyc08g076930.1.1.1"/>
    <property type="gene ID" value="Solyc08g076930.1"/>
</dbReference>
<dbReference type="GeneID" id="544165"/>
<dbReference type="Gramene" id="Solyc08g076930.1.1">
    <property type="protein sequence ID" value="Solyc08g076930.1.1.1"/>
    <property type="gene ID" value="Solyc08g076930.1"/>
</dbReference>
<dbReference type="KEGG" id="sly:544165"/>
<dbReference type="InParanoid" id="A0A3Q7HRZ6"/>
<dbReference type="OMA" id="WVAGTEK"/>
<dbReference type="OrthoDB" id="1926382at2759"/>
<dbReference type="Proteomes" id="UP000004994">
    <property type="component" value="Chromosome 8"/>
</dbReference>
<dbReference type="GO" id="GO:0005634">
    <property type="term" value="C:nucleus"/>
    <property type="evidence" value="ECO:0000318"/>
    <property type="project" value="GO_Central"/>
</dbReference>
<dbReference type="GO" id="GO:0003700">
    <property type="term" value="F:DNA-binding transcription factor activity"/>
    <property type="evidence" value="ECO:0000318"/>
    <property type="project" value="GO_Central"/>
</dbReference>
<dbReference type="GO" id="GO:0046983">
    <property type="term" value="F:protein dimerization activity"/>
    <property type="evidence" value="ECO:0007669"/>
    <property type="project" value="InterPro"/>
</dbReference>
<dbReference type="GO" id="GO:0043565">
    <property type="term" value="F:sequence-specific DNA binding"/>
    <property type="evidence" value="ECO:0000314"/>
    <property type="project" value="UniProtKB"/>
</dbReference>
<dbReference type="GO" id="GO:0000976">
    <property type="term" value="F:transcription cis-regulatory region binding"/>
    <property type="evidence" value="ECO:0000318"/>
    <property type="project" value="GO_Central"/>
</dbReference>
<dbReference type="GO" id="GO:0006952">
    <property type="term" value="P:defense response"/>
    <property type="evidence" value="ECO:0007669"/>
    <property type="project" value="UniProtKB-KW"/>
</dbReference>
<dbReference type="GO" id="GO:0045893">
    <property type="term" value="P:positive regulation of DNA-templated transcription"/>
    <property type="evidence" value="ECO:0000314"/>
    <property type="project" value="UniProtKB"/>
</dbReference>
<dbReference type="GO" id="GO:0006355">
    <property type="term" value="P:regulation of DNA-templated transcription"/>
    <property type="evidence" value="ECO:0000318"/>
    <property type="project" value="GO_Central"/>
</dbReference>
<dbReference type="CDD" id="cd11449">
    <property type="entry name" value="bHLH_AtAIB_like"/>
    <property type="match status" value="1"/>
</dbReference>
<dbReference type="FunFam" id="4.10.280.10:FF:000078">
    <property type="entry name" value="Transcription factor bHLH13"/>
    <property type="match status" value="1"/>
</dbReference>
<dbReference type="Gene3D" id="4.10.280.10">
    <property type="entry name" value="Helix-loop-helix DNA-binding domain"/>
    <property type="match status" value="1"/>
</dbReference>
<dbReference type="InterPro" id="IPR045084">
    <property type="entry name" value="AIB/MYC-like"/>
</dbReference>
<dbReference type="InterPro" id="IPR054502">
    <property type="entry name" value="bHLH-TF_ACT-like_plant"/>
</dbReference>
<dbReference type="InterPro" id="IPR011598">
    <property type="entry name" value="bHLH_dom"/>
</dbReference>
<dbReference type="InterPro" id="IPR036638">
    <property type="entry name" value="HLH_DNA-bd_sf"/>
</dbReference>
<dbReference type="InterPro" id="IPR025610">
    <property type="entry name" value="MYC/MYB_N"/>
</dbReference>
<dbReference type="PANTHER" id="PTHR11514">
    <property type="entry name" value="MYC"/>
    <property type="match status" value="1"/>
</dbReference>
<dbReference type="PANTHER" id="PTHR11514:SF43">
    <property type="entry name" value="TRANSCRIPTION FACTOR MYC2"/>
    <property type="match status" value="1"/>
</dbReference>
<dbReference type="Pfam" id="PF14215">
    <property type="entry name" value="bHLH-MYC_N"/>
    <property type="match status" value="1"/>
</dbReference>
<dbReference type="Pfam" id="PF22754">
    <property type="entry name" value="bHLH-TF_ACT-like_plant"/>
    <property type="match status" value="1"/>
</dbReference>
<dbReference type="Pfam" id="PF00010">
    <property type="entry name" value="HLH"/>
    <property type="match status" value="1"/>
</dbReference>
<dbReference type="SMART" id="SM00353">
    <property type="entry name" value="HLH"/>
    <property type="match status" value="1"/>
</dbReference>
<dbReference type="SUPFAM" id="SSF47459">
    <property type="entry name" value="HLH, helix-loop-helix DNA-binding domain"/>
    <property type="match status" value="1"/>
</dbReference>
<dbReference type="PROSITE" id="PS50888">
    <property type="entry name" value="BHLH"/>
    <property type="match status" value="1"/>
</dbReference>
<accession>A0A3Q7HRZ6</accession>
<accession>U5YT97</accession>
<comment type="function">
    <text evidence="3 4 5 6 7 8">Transcriptional activator that binds to the G-box motif (5'-AACGTG-3') found in the promoter of the jasmonate-induced gene LAPA1 (PubMed:15231736). Acts as a negative regulator of blue light-mediated photomorphogenesis and positively regulates root growth (PubMed:24483714). Promotes growth in response to the phytohormones abscisic acid (ABA) and jasmonate (JA) (PubMed:24483714). Binds to the G-box motif (5'-CACGTG-3') of the RBCS-3A gene promoter (PubMed:24483714). Acts downstream of the jasmonate (JA) receptor to orchestrate JA-mediated activation of plant responses (PubMed:28733419). Positively regulates both wound-responsive and pathogen-responsive genes through MYC2-targeted transcription factors (MTFs) involved in early response to JA (PubMed:28733419). With JA2L forms a transcription module that regulates wounding-responsive genes (PubMed:28733419). With ERF.C3 forms a transcription module that regulates pathogen-responsive genes (PubMed:28733419). Plays a critical role in orchestrating JA-mediated defense gene expression during Botrytis cinerea infection (PubMed:28733419). Negatively regulates defense responses to root-knot nematodes, potentially by mediating crosstalk among the hormones strigolactones, abscisic acid (ABA) and jasmonate (JA) (PubMed:30576511). Regulates the termination of JA-mediated defense responses by specifically binding the G-box (5'-CACATG-3') motifs in the promoters of MTB1, MTB2 and MTB3, which are transcription factors that negatively regulates JA signaling (PubMed:30610166). May be involved in JA-induced chilling tolerance, possibly by ameliorating the antioxidant enzyme system of fruit and increasing proline and lycopene levels (PubMed:29528226).</text>
</comment>
<comment type="subunit">
    <text evidence="5 8">Interacts (via N-terminus) with MED25 (PubMed:30610166). Interacts (via N-terminus) with JAZ7 (PubMed:28733419, PubMed:30610166). MED25 and JAZ7 compete with each other to bind to MYC2 (PubMed:30610166). Interacts (via N-terminus) with MTB1 (PubMed:30610166). MTB1 and MED25 compete with each other to bind to MYC2 (PubMed:30610166).</text>
</comment>
<comment type="subcellular location">
    <subcellularLocation>
        <location evidence="1">Nucleus</location>
    </subcellularLocation>
</comment>
<comment type="tissue specificity">
    <text evidence="3">Expressed at low levels in roots, stems, leaves, flowers and fruits.</text>
</comment>
<comment type="induction">
    <text evidence="3 5 6 7">Induced by methyl jasmonate (PubMed:15231736, PubMed:28733419). Induced by wounding (PubMed:15231736). Induced by infection with the fungal pathogen Botrytis cinerea (PubMed:28733419). Induced in fruit by storage in cold (PubMed:29528226). Induced by hydrogen peroxide and infection with root-knot nematodes (PubMed:30576511).</text>
</comment>
<comment type="miscellaneous">
    <text evidence="4 5 7">Plants over-expressing MYC2 exhibit increased number of branches with reduced internode distance (PubMed:24483714). Plants silencing MYC2 exhibit increased susceptibility to infection by the fungal pathogen Botrytis cinerea (PubMed:28733419). Plants silencing MYC2 show decreased susceptibility to infection by root-knot nematodes (PubMed:30576511).</text>
</comment>
<comment type="caution">
    <text evidence="1">Contains a degenerate basic motif not likely to bind DNA.</text>
</comment>
<evidence type="ECO:0000255" key="1">
    <source>
        <dbReference type="PROSITE-ProRule" id="PRU00981"/>
    </source>
</evidence>
<evidence type="ECO:0000256" key="2">
    <source>
        <dbReference type="SAM" id="MobiDB-lite"/>
    </source>
</evidence>
<evidence type="ECO:0000269" key="3">
    <source>
    </source>
</evidence>
<evidence type="ECO:0000269" key="4">
    <source>
    </source>
</evidence>
<evidence type="ECO:0000269" key="5">
    <source>
    </source>
</evidence>
<evidence type="ECO:0000269" key="6">
    <source>
    </source>
</evidence>
<evidence type="ECO:0000269" key="7">
    <source>
    </source>
</evidence>
<evidence type="ECO:0000269" key="8">
    <source>
    </source>
</evidence>
<evidence type="ECO:0000303" key="9">
    <source>
    </source>
</evidence>
<evidence type="ECO:0000303" key="10">
    <source>
    </source>
</evidence>
<evidence type="ECO:0000303" key="11">
    <source>
    </source>
</evidence>
<evidence type="ECO:0000303" key="12">
    <source>
    </source>
</evidence>
<evidence type="ECO:0000305" key="13"/>
<evidence type="ECO:0000305" key="14">
    <source>
    </source>
</evidence>
<keyword id="KW-0010">Activator</keyword>
<keyword id="KW-0217">Developmental protein</keyword>
<keyword id="KW-0238">DNA-binding</keyword>
<keyword id="KW-0341">Growth regulation</keyword>
<keyword id="KW-1184">Jasmonic acid signaling pathway</keyword>
<keyword id="KW-0539">Nucleus</keyword>
<keyword id="KW-0611">Plant defense</keyword>
<keyword id="KW-1185">Reference proteome</keyword>
<keyword id="KW-0346">Stress response</keyword>
<keyword id="KW-0804">Transcription</keyword>
<keyword id="KW-0805">Transcription regulation</keyword>
<sequence>MTEYSLPTMNLWNNSTSDDNVSMMEAFMSSDLSFWATNNSTSAAVVGVNSNLPHASSNTPSVFAPSSSTSASTLSAAATVDASKSMPFFNQETLQQRLQALIDGARETWTYAIFWQSSVVDFSSPSVLGWGDGYYKGEEDKAKRKLSVSSPAYIAEQEHRKKVLRELNSLISGAPPGTDDAVDEEVTDTEWFFLISMTQSFVNGSGLPGQALYSSSPIWVAGTEKLAASHCERVRQAQGFGLQTIVCIPSANGVVELGSTELIVQSSDLMNKVRVLFNFSNDLGSGSWAVQPESDPSALWLTDPSSSGMEVRESLNTVQTNSVPSSNSNKQIAYGNENNHPSGNGQSCYNQQQQKNPPQQQTQGFFTRELNFSEFGFDGSSNRNGNSSVSCKPESGEILNFGDSTKKSASSANVNLFTGQSQFGAGEENNNKNKKRSATSRGSNEEGMLSFVSGTVLPSSGMKSGGGGGEDSEHSDLEASVVKEADSSRVVEPEKRPRKRGRKPANGREEPLNHVEAERQRREKLNQRFYALRAVVPNVSKMDKASLLGDAISYINELKSKLQNTESDKEDLKSQIEDLKKESRRPGPPPPPNQDLKMSSHTGGKIVDVDIDVKIIGWDAMIRIQCNKKNHPAARLMAALMELDLDVHHASVSVVNDLMIQQATVKMGSRHYTEEQLRVALTSKIAETH</sequence>
<reference key="1">
    <citation type="journal article" date="2014" name="BMC Plant Biol.">
        <title>LeMYC2 acts as a negative regulator of blue light mediated photomorphogenic growth, and promotes the growth of adult tomato plants.</title>
        <authorList>
            <person name="Gupta N."/>
            <person name="Prasad V.B."/>
            <person name="Chattopadhyay S."/>
        </authorList>
    </citation>
    <scope>NUCLEOTIDE SEQUENCE [MRNA]</scope>
    <scope>FUNCTION</scope>
</reference>
<reference key="2">
    <citation type="journal article" date="2012" name="Nature">
        <title>The tomato genome sequence provides insights into fleshy fruit evolution.</title>
        <authorList>
            <consortium name="Tomato Genome Consortium"/>
        </authorList>
    </citation>
    <scope>NUCLEOTIDE SEQUENCE [LARGE SCALE GENOMIC DNA]</scope>
    <source>
        <strain>cv. Heinz 1706</strain>
    </source>
</reference>
<reference key="3">
    <citation type="journal article" date="2004" name="Genes Dev.">
        <title>Conserved MYC transcription factors play a key role in jasmonate signaling both in tomato and Arabidopsis.</title>
        <authorList>
            <person name="Boter M."/>
            <person name="Ruiz-Rivero O."/>
            <person name="Abdeen A."/>
            <person name="Prat S."/>
        </authorList>
    </citation>
    <scope>FUNCTION</scope>
    <scope>TISSUE SPECIFICITY</scope>
    <scope>INDUCTION</scope>
</reference>
<reference key="4">
    <citation type="journal article" date="2015" name="BMC Genomics">
        <title>Genome-wide identification and characterization of the bHLH gene family in tomato.</title>
        <authorList>
            <person name="Sun H."/>
            <person name="Fan H.J."/>
            <person name="Ling H.Q."/>
        </authorList>
    </citation>
    <scope>GENE FAMILY</scope>
    <scope>NOMENCLATURE</scope>
</reference>
<reference key="5">
    <citation type="journal article" date="2017" name="Plant Cell">
        <title>MYC2 orchestrates a hierarchical transcriptional cascade that regulates jasmonate-mediated plant immunity in tomato.</title>
        <authorList>
            <person name="Du M."/>
            <person name="Zhao J."/>
            <person name="Tzeng D.T.W."/>
            <person name="Liu Y."/>
            <person name="Deng L."/>
            <person name="Yang T."/>
            <person name="Zhai Q."/>
            <person name="Wu F."/>
            <person name="Huang Z."/>
            <person name="Zhou M."/>
            <person name="Wang Q."/>
            <person name="Chen Q."/>
            <person name="Zhong S."/>
            <person name="Li C.B."/>
            <person name="Li C."/>
        </authorList>
    </citation>
    <scope>FUNCTION</scope>
    <scope>INTERACTION WITH JAZ7</scope>
    <scope>INDUCTION</scope>
</reference>
<reference key="6">
    <citation type="journal article" date="2018" name="J. Agric. Food Chem.">
        <title>SlMYC2 involved in methyl jasmonate-induced tomato fruit chilling tolerance.</title>
        <authorList>
            <person name="Min D."/>
            <person name="Li F."/>
            <person name="Zhang X."/>
            <person name="Cui X."/>
            <person name="Shu P."/>
            <person name="Dong L."/>
            <person name="Ren C."/>
        </authorList>
    </citation>
    <scope>FUNCTION</scope>
    <scope>INDUCTION BY COLD STORAGE</scope>
</reference>
<reference key="7">
    <citation type="journal article" date="2019" name="J. Exp. Bot.">
        <title>Strigolactones positively regulate defense against root-knot nematodes in tomato.</title>
        <authorList>
            <person name="Xu X."/>
            <person name="Fang P."/>
            <person name="Zhang H."/>
            <person name="Chi C."/>
            <person name="Song L."/>
            <person name="Xia X."/>
            <person name="Shi K."/>
            <person name="Zhou Y."/>
            <person name="Zhou J."/>
            <person name="Yu J."/>
        </authorList>
    </citation>
    <scope>FUNCTION</scope>
    <scope>INDUCTION</scope>
</reference>
<reference key="8">
    <citation type="journal article" date="2019" name="Plant Cell">
        <title>MYC2 regulates the termination of jasmonate signaling via an autoregulatory negative feedback loop.</title>
        <authorList>
            <person name="Liu Y."/>
            <person name="Du M."/>
            <person name="Deng L."/>
            <person name="Shen J."/>
            <person name="Fang M."/>
            <person name="Chen Q."/>
            <person name="Lu Y."/>
            <person name="Wang Q."/>
            <person name="Li C."/>
            <person name="Zhai Q."/>
        </authorList>
    </citation>
    <scope>FUNCTION</scope>
    <scope>INTERACTION WITH MED25; JAZ7 AND MTB1</scope>
</reference>
<proteinExistence type="evidence at protein level"/>
<gene>
    <name evidence="10" type="primary">MYC2</name>
    <name evidence="11" type="synonym">BHLH147</name>
    <name evidence="9" type="synonym">JAMYC2</name>
    <name evidence="13" type="ordered locus">Solyc08g076930</name>
</gene>
<name>MYC2_SOLLC</name>